<sequence length="484" mass="54849">MKLIVKTFQEITIKSRPVRKRFIRQLAKNIRAVLRDLDPELKVEGEWDNLEVETAVVDAKARREMIERLTCTPGIGHFLEVHEYPLGDFDDILAKCKAHFGDQLAGKTFAVRCKRAGKHAFTSMEVERYVGSGLRRECGAAGIDLKQPEVEVRMEIRLDRLFVIHRQHPGLGGYPLGALEQVLVLMSGGFDSTVAAYQMMRRGMISHFVFFNLGGRAHELGVMEVAHYLWEKYGRSQRVLFVSVPFEEVVGEILTKVDDSYMGVTLKRMMLRAASRVAERLELDALVTGEAISQVSSQTLPNLSVIDRVTDTLVLRPLIVSHKQDIIDTARQIGTAEFARHMPEYCGVISVNPTTQAKPYRVEHEESKFDMAVLERALERATQRTVDRVIDELGQDLQVEEVGEVLPGQIVIDIRHPDAQEDEPLALEGVEVQALPFYAINSRFKELDANRQYLLYCDKGVMSRLHAHHLLNEGHTNVRVYRPA</sequence>
<proteinExistence type="inferred from homology"/>
<comment type="function">
    <text evidence="1">Catalyzes the ATP-dependent transfer of a sulfur to tRNA to produce 4-thiouridine in position 8 of tRNAs, which functions as a near-UV photosensor. Also catalyzes the transfer of sulfur to the sulfur carrier protein ThiS, forming ThiS-thiocarboxylate. This is a step in the synthesis of thiazole, in the thiamine biosynthesis pathway. The sulfur is donated as persulfide by IscS.</text>
</comment>
<comment type="catalytic activity">
    <reaction evidence="1">
        <text>[ThiI sulfur-carrier protein]-S-sulfanyl-L-cysteine + a uridine in tRNA + 2 reduced [2Fe-2S]-[ferredoxin] + ATP + H(+) = [ThiI sulfur-carrier protein]-L-cysteine + a 4-thiouridine in tRNA + 2 oxidized [2Fe-2S]-[ferredoxin] + AMP + diphosphate</text>
        <dbReference type="Rhea" id="RHEA:24176"/>
        <dbReference type="Rhea" id="RHEA-COMP:10000"/>
        <dbReference type="Rhea" id="RHEA-COMP:10001"/>
        <dbReference type="Rhea" id="RHEA-COMP:13337"/>
        <dbReference type="Rhea" id="RHEA-COMP:13338"/>
        <dbReference type="Rhea" id="RHEA-COMP:13339"/>
        <dbReference type="Rhea" id="RHEA-COMP:13340"/>
        <dbReference type="ChEBI" id="CHEBI:15378"/>
        <dbReference type="ChEBI" id="CHEBI:29950"/>
        <dbReference type="ChEBI" id="CHEBI:30616"/>
        <dbReference type="ChEBI" id="CHEBI:33019"/>
        <dbReference type="ChEBI" id="CHEBI:33737"/>
        <dbReference type="ChEBI" id="CHEBI:33738"/>
        <dbReference type="ChEBI" id="CHEBI:61963"/>
        <dbReference type="ChEBI" id="CHEBI:65315"/>
        <dbReference type="ChEBI" id="CHEBI:136798"/>
        <dbReference type="ChEBI" id="CHEBI:456215"/>
        <dbReference type="EC" id="2.8.1.4"/>
    </reaction>
</comment>
<comment type="catalytic activity">
    <reaction evidence="1">
        <text>[ThiS sulfur-carrier protein]-C-terminal Gly-Gly-AMP + S-sulfanyl-L-cysteinyl-[cysteine desulfurase] + AH2 = [ThiS sulfur-carrier protein]-C-terminal-Gly-aminoethanethioate + L-cysteinyl-[cysteine desulfurase] + A + AMP + 2 H(+)</text>
        <dbReference type="Rhea" id="RHEA:43340"/>
        <dbReference type="Rhea" id="RHEA-COMP:12157"/>
        <dbReference type="Rhea" id="RHEA-COMP:12158"/>
        <dbReference type="Rhea" id="RHEA-COMP:12910"/>
        <dbReference type="Rhea" id="RHEA-COMP:19908"/>
        <dbReference type="ChEBI" id="CHEBI:13193"/>
        <dbReference type="ChEBI" id="CHEBI:15378"/>
        <dbReference type="ChEBI" id="CHEBI:17499"/>
        <dbReference type="ChEBI" id="CHEBI:29950"/>
        <dbReference type="ChEBI" id="CHEBI:61963"/>
        <dbReference type="ChEBI" id="CHEBI:90618"/>
        <dbReference type="ChEBI" id="CHEBI:232372"/>
        <dbReference type="ChEBI" id="CHEBI:456215"/>
    </reaction>
</comment>
<comment type="pathway">
    <text evidence="1">Cofactor biosynthesis; thiamine diphosphate biosynthesis.</text>
</comment>
<comment type="subcellular location">
    <subcellularLocation>
        <location evidence="1">Cytoplasm</location>
    </subcellularLocation>
</comment>
<comment type="similarity">
    <text evidence="1">Belongs to the ThiI family.</text>
</comment>
<dbReference type="EC" id="2.8.1.4" evidence="1"/>
<dbReference type="EMBL" id="FM209186">
    <property type="protein sequence ID" value="CAW30262.1"/>
    <property type="molecule type" value="Genomic_DNA"/>
</dbReference>
<dbReference type="RefSeq" id="WP_003096011.1">
    <property type="nucleotide sequence ID" value="NC_011770.1"/>
</dbReference>
<dbReference type="SMR" id="B7V3L1"/>
<dbReference type="KEGG" id="pag:PLES_55081"/>
<dbReference type="HOGENOM" id="CLU_037952_4_1_6"/>
<dbReference type="UniPathway" id="UPA00060"/>
<dbReference type="GO" id="GO:0005829">
    <property type="term" value="C:cytosol"/>
    <property type="evidence" value="ECO:0007669"/>
    <property type="project" value="TreeGrafter"/>
</dbReference>
<dbReference type="GO" id="GO:0005524">
    <property type="term" value="F:ATP binding"/>
    <property type="evidence" value="ECO:0007669"/>
    <property type="project" value="UniProtKB-UniRule"/>
</dbReference>
<dbReference type="GO" id="GO:0004810">
    <property type="term" value="F:CCA tRNA nucleotidyltransferase activity"/>
    <property type="evidence" value="ECO:0007669"/>
    <property type="project" value="InterPro"/>
</dbReference>
<dbReference type="GO" id="GO:0000049">
    <property type="term" value="F:tRNA binding"/>
    <property type="evidence" value="ECO:0007669"/>
    <property type="project" value="UniProtKB-UniRule"/>
</dbReference>
<dbReference type="GO" id="GO:0140741">
    <property type="term" value="F:tRNA-uracil-4 sulfurtransferase activity"/>
    <property type="evidence" value="ECO:0007669"/>
    <property type="project" value="UniProtKB-EC"/>
</dbReference>
<dbReference type="GO" id="GO:0009228">
    <property type="term" value="P:thiamine biosynthetic process"/>
    <property type="evidence" value="ECO:0007669"/>
    <property type="project" value="UniProtKB-KW"/>
</dbReference>
<dbReference type="GO" id="GO:0009229">
    <property type="term" value="P:thiamine diphosphate biosynthetic process"/>
    <property type="evidence" value="ECO:0007669"/>
    <property type="project" value="UniProtKB-UniRule"/>
</dbReference>
<dbReference type="GO" id="GO:0052837">
    <property type="term" value="P:thiazole biosynthetic process"/>
    <property type="evidence" value="ECO:0007669"/>
    <property type="project" value="InterPro"/>
</dbReference>
<dbReference type="GO" id="GO:0002937">
    <property type="term" value="P:tRNA 4-thiouridine biosynthesis"/>
    <property type="evidence" value="ECO:0007669"/>
    <property type="project" value="TreeGrafter"/>
</dbReference>
<dbReference type="CDD" id="cd01712">
    <property type="entry name" value="PPase_ThiI"/>
    <property type="match status" value="1"/>
</dbReference>
<dbReference type="CDD" id="cd11716">
    <property type="entry name" value="THUMP_ThiI"/>
    <property type="match status" value="1"/>
</dbReference>
<dbReference type="FunFam" id="3.40.50.620:FF:000029">
    <property type="entry name" value="tRNA sulfurtransferase"/>
    <property type="match status" value="1"/>
</dbReference>
<dbReference type="Gene3D" id="3.30.2130.30">
    <property type="match status" value="1"/>
</dbReference>
<dbReference type="Gene3D" id="3.40.50.620">
    <property type="entry name" value="HUPs"/>
    <property type="match status" value="1"/>
</dbReference>
<dbReference type="Gene3D" id="3.40.250.10">
    <property type="entry name" value="Rhodanese-like domain"/>
    <property type="match status" value="1"/>
</dbReference>
<dbReference type="HAMAP" id="MF_00021">
    <property type="entry name" value="ThiI"/>
    <property type="match status" value="1"/>
</dbReference>
<dbReference type="InterPro" id="IPR001763">
    <property type="entry name" value="Rhodanese-like_dom"/>
</dbReference>
<dbReference type="InterPro" id="IPR036873">
    <property type="entry name" value="Rhodanese-like_dom_sf"/>
</dbReference>
<dbReference type="InterPro" id="IPR014729">
    <property type="entry name" value="Rossmann-like_a/b/a_fold"/>
</dbReference>
<dbReference type="InterPro" id="IPR020536">
    <property type="entry name" value="ThiI_AANH"/>
</dbReference>
<dbReference type="InterPro" id="IPR054173">
    <property type="entry name" value="ThiI_fer"/>
</dbReference>
<dbReference type="InterPro" id="IPR049961">
    <property type="entry name" value="ThiI_N"/>
</dbReference>
<dbReference type="InterPro" id="IPR026340">
    <property type="entry name" value="THII_Thiazole_biosynth_dom"/>
</dbReference>
<dbReference type="InterPro" id="IPR004114">
    <property type="entry name" value="THUMP_dom"/>
</dbReference>
<dbReference type="InterPro" id="IPR049962">
    <property type="entry name" value="THUMP_ThiI"/>
</dbReference>
<dbReference type="InterPro" id="IPR003720">
    <property type="entry name" value="tRNA_STrfase"/>
</dbReference>
<dbReference type="InterPro" id="IPR050102">
    <property type="entry name" value="tRNA_sulfurtransferase_ThiI"/>
</dbReference>
<dbReference type="NCBIfam" id="TIGR04271">
    <property type="entry name" value="ThiI_C_thiazole"/>
    <property type="match status" value="1"/>
</dbReference>
<dbReference type="NCBIfam" id="TIGR00342">
    <property type="entry name" value="tRNA uracil 4-sulfurtransferase ThiI"/>
    <property type="match status" value="1"/>
</dbReference>
<dbReference type="PANTHER" id="PTHR43209">
    <property type="entry name" value="TRNA SULFURTRANSFERASE"/>
    <property type="match status" value="1"/>
</dbReference>
<dbReference type="PANTHER" id="PTHR43209:SF1">
    <property type="entry name" value="TRNA SULFURTRANSFERASE"/>
    <property type="match status" value="1"/>
</dbReference>
<dbReference type="Pfam" id="PF02568">
    <property type="entry name" value="ThiI"/>
    <property type="match status" value="1"/>
</dbReference>
<dbReference type="Pfam" id="PF22025">
    <property type="entry name" value="ThiI_fer"/>
    <property type="match status" value="1"/>
</dbReference>
<dbReference type="Pfam" id="PF02926">
    <property type="entry name" value="THUMP"/>
    <property type="match status" value="1"/>
</dbReference>
<dbReference type="SMART" id="SM00981">
    <property type="entry name" value="THUMP"/>
    <property type="match status" value="1"/>
</dbReference>
<dbReference type="SUPFAM" id="SSF52402">
    <property type="entry name" value="Adenine nucleotide alpha hydrolases-like"/>
    <property type="match status" value="1"/>
</dbReference>
<dbReference type="SUPFAM" id="SSF52821">
    <property type="entry name" value="Rhodanese/Cell cycle control phosphatase"/>
    <property type="match status" value="1"/>
</dbReference>
<dbReference type="SUPFAM" id="SSF143437">
    <property type="entry name" value="THUMP domain-like"/>
    <property type="match status" value="1"/>
</dbReference>
<dbReference type="PROSITE" id="PS50206">
    <property type="entry name" value="RHODANESE_3"/>
    <property type="match status" value="1"/>
</dbReference>
<dbReference type="PROSITE" id="PS51165">
    <property type="entry name" value="THUMP"/>
    <property type="match status" value="1"/>
</dbReference>
<feature type="chain" id="PRO_1000116406" description="tRNA sulfurtransferase">
    <location>
        <begin position="1"/>
        <end position="484"/>
    </location>
</feature>
<feature type="domain" description="THUMP" evidence="1">
    <location>
        <begin position="63"/>
        <end position="167"/>
    </location>
</feature>
<feature type="domain" description="Rhodanese" evidence="1">
    <location>
        <begin position="405"/>
        <end position="483"/>
    </location>
</feature>
<feature type="active site" description="Cysteine persulfide intermediate" evidence="1">
    <location>
        <position position="457"/>
    </location>
</feature>
<feature type="binding site" evidence="1">
    <location>
        <begin position="185"/>
        <end position="186"/>
    </location>
    <ligand>
        <name>ATP</name>
        <dbReference type="ChEBI" id="CHEBI:30616"/>
    </ligand>
</feature>
<feature type="binding site" evidence="1">
    <location>
        <position position="267"/>
    </location>
    <ligand>
        <name>ATP</name>
        <dbReference type="ChEBI" id="CHEBI:30616"/>
    </ligand>
</feature>
<feature type="binding site" evidence="1">
    <location>
        <position position="289"/>
    </location>
    <ligand>
        <name>ATP</name>
        <dbReference type="ChEBI" id="CHEBI:30616"/>
    </ligand>
</feature>
<feature type="binding site" evidence="1">
    <location>
        <position position="298"/>
    </location>
    <ligand>
        <name>ATP</name>
        <dbReference type="ChEBI" id="CHEBI:30616"/>
    </ligand>
</feature>
<feature type="disulfide bond" description="Redox-active" evidence="1">
    <location>
        <begin position="346"/>
        <end position="457"/>
    </location>
</feature>
<protein>
    <recommendedName>
        <fullName evidence="1">tRNA sulfurtransferase</fullName>
        <ecNumber evidence="1">2.8.1.4</ecNumber>
    </recommendedName>
    <alternativeName>
        <fullName evidence="1">Sulfur carrier protein ThiS sulfurtransferase</fullName>
    </alternativeName>
    <alternativeName>
        <fullName evidence="1">Thiamine biosynthesis protein ThiI</fullName>
    </alternativeName>
    <alternativeName>
        <fullName evidence="1">tRNA 4-thiouridine synthase</fullName>
    </alternativeName>
</protein>
<keyword id="KW-0067">ATP-binding</keyword>
<keyword id="KW-0963">Cytoplasm</keyword>
<keyword id="KW-1015">Disulfide bond</keyword>
<keyword id="KW-0547">Nucleotide-binding</keyword>
<keyword id="KW-0676">Redox-active center</keyword>
<keyword id="KW-0694">RNA-binding</keyword>
<keyword id="KW-0784">Thiamine biosynthesis</keyword>
<keyword id="KW-0808">Transferase</keyword>
<keyword id="KW-0820">tRNA-binding</keyword>
<evidence type="ECO:0000255" key="1">
    <source>
        <dbReference type="HAMAP-Rule" id="MF_00021"/>
    </source>
</evidence>
<gene>
    <name evidence="1" type="primary">thiI</name>
    <name type="ordered locus">PLES_55081</name>
</gene>
<accession>B7V3L1</accession>
<reference key="1">
    <citation type="journal article" date="2009" name="Genome Res.">
        <title>Newly introduced genomic prophage islands are critical determinants of in vivo competitiveness in the Liverpool epidemic strain of Pseudomonas aeruginosa.</title>
        <authorList>
            <person name="Winstanley C."/>
            <person name="Langille M.G.I."/>
            <person name="Fothergill J.L."/>
            <person name="Kukavica-Ibrulj I."/>
            <person name="Paradis-Bleau C."/>
            <person name="Sanschagrin F."/>
            <person name="Thomson N.R."/>
            <person name="Winsor G.L."/>
            <person name="Quail M.A."/>
            <person name="Lennard N."/>
            <person name="Bignell A."/>
            <person name="Clarke L."/>
            <person name="Seeger K."/>
            <person name="Saunders D."/>
            <person name="Harris D."/>
            <person name="Parkhill J."/>
            <person name="Hancock R.E.W."/>
            <person name="Brinkman F.S.L."/>
            <person name="Levesque R.C."/>
        </authorList>
    </citation>
    <scope>NUCLEOTIDE SEQUENCE [LARGE SCALE GENOMIC DNA]</scope>
    <source>
        <strain>LESB58</strain>
    </source>
</reference>
<name>THII_PSEA8</name>
<organism>
    <name type="scientific">Pseudomonas aeruginosa (strain LESB58)</name>
    <dbReference type="NCBI Taxonomy" id="557722"/>
    <lineage>
        <taxon>Bacteria</taxon>
        <taxon>Pseudomonadati</taxon>
        <taxon>Pseudomonadota</taxon>
        <taxon>Gammaproteobacteria</taxon>
        <taxon>Pseudomonadales</taxon>
        <taxon>Pseudomonadaceae</taxon>
        <taxon>Pseudomonas</taxon>
    </lineage>
</organism>